<proteinExistence type="evidence at transcript level"/>
<name>RLR64_PLAVT</name>
<protein>
    <recommendedName>
        <fullName evidence="3">Secreted RxLR effector protein 64</fullName>
    </recommendedName>
</protein>
<comment type="function">
    <text evidence="2">Effector that acts as a broad suppressor of cell death to interrupt plant immunity. Inhibits cell death induced by cell death-inducing proteins, including the PAMP elicitor INF1 from P.infestans.</text>
</comment>
<comment type="subcellular location">
    <subcellularLocation>
        <location evidence="2">Secreted</location>
    </subcellularLocation>
    <subcellularLocation>
        <location evidence="2">Host cytoplasm</location>
    </subcellularLocation>
    <subcellularLocation>
        <location evidence="2">Host nucleus</location>
    </subcellularLocation>
    <subcellularLocation>
        <location evidence="1">Membrane</location>
        <topology evidence="1">Single-pass membrane protein</topology>
    </subcellularLocation>
</comment>
<comment type="induction">
    <text evidence="2">Expression is up-regulated at the earlier infection stages.</text>
</comment>
<comment type="domain">
    <text evidence="5">Has a conserved RxLR motif that acts to carry the protein into the host cell cytoplasm. Lacks the 'so-called' EER motif, which is found closely behind the RxLR motif in most of RxLR effector family members, but the presence of an EER motif is not always essential for the translocation of every RxLR effector into host cells, or for inducing a hypersensitive response.</text>
</comment>
<comment type="similarity">
    <text evidence="4">Belongs to the RxLR effector family.</text>
</comment>
<evidence type="ECO:0000255" key="1"/>
<evidence type="ECO:0000269" key="2">
    <source>
    </source>
</evidence>
<evidence type="ECO:0000303" key="3">
    <source>
    </source>
</evidence>
<evidence type="ECO:0000305" key="4"/>
<evidence type="ECO:0000305" key="5">
    <source>
    </source>
</evidence>
<organism>
    <name type="scientific">Plasmopara viticola</name>
    <name type="common">Downy mildew of grapevine</name>
    <name type="synonym">Botrytis viticola</name>
    <dbReference type="NCBI Taxonomy" id="143451"/>
    <lineage>
        <taxon>Eukaryota</taxon>
        <taxon>Sar</taxon>
        <taxon>Stramenopiles</taxon>
        <taxon>Oomycota</taxon>
        <taxon>Peronosporales</taxon>
        <taxon>Peronosporaceae</taxon>
        <taxon>Plasmopara</taxon>
    </lineage>
</organism>
<gene>
    <name evidence="3" type="primary">RxLR64</name>
</gene>
<sequence length="101" mass="11272">MMSPPMTTTLMFILNYAIISFHGQPSGISWGNHIETAEAAAILAMANRELRSRELLLWTSGSTHLLLQPILPLPLCLPFPLVPASIFKKMMLPLSAFSFWM</sequence>
<reference key="1">
    <citation type="journal article" date="2016" name="Front. Microbiol.">
        <title>Studying the mechanism of Plasmopara viticola RxLR effectors on suppressing plant immunity.</title>
        <authorList>
            <person name="Xiang J."/>
            <person name="Li X."/>
            <person name="Wu J."/>
            <person name="Yin L."/>
            <person name="Zhang Y."/>
            <person name="Lu J."/>
        </authorList>
    </citation>
    <scope>NUCLEOTIDE SEQUENCE [MRNA]</scope>
    <scope>INDUCTION</scope>
    <scope>FUNCTION</scope>
    <scope>SUBCELLULAR LOCATION</scope>
    <scope>DOMAIN</scope>
    <source>
        <strain>ZJ-1-1</strain>
    </source>
</reference>
<keyword id="KW-1035">Host cytoplasm</keyword>
<keyword id="KW-1048">Host nucleus</keyword>
<keyword id="KW-0472">Membrane</keyword>
<keyword id="KW-0964">Secreted</keyword>
<keyword id="KW-0732">Signal</keyword>
<keyword id="KW-0812">Transmembrane</keyword>
<keyword id="KW-1133">Transmembrane helix</keyword>
<keyword id="KW-0843">Virulence</keyword>
<dbReference type="EMBL" id="KX010965">
    <property type="protein sequence ID" value="ANC73385.1"/>
    <property type="molecule type" value="mRNA"/>
</dbReference>
<dbReference type="GO" id="GO:0005576">
    <property type="term" value="C:extracellular region"/>
    <property type="evidence" value="ECO:0007669"/>
    <property type="project" value="UniProtKB-SubCell"/>
</dbReference>
<dbReference type="GO" id="GO:0030430">
    <property type="term" value="C:host cell cytoplasm"/>
    <property type="evidence" value="ECO:0007669"/>
    <property type="project" value="UniProtKB-SubCell"/>
</dbReference>
<dbReference type="GO" id="GO:0042025">
    <property type="term" value="C:host cell nucleus"/>
    <property type="evidence" value="ECO:0007669"/>
    <property type="project" value="UniProtKB-SubCell"/>
</dbReference>
<dbReference type="GO" id="GO:0016020">
    <property type="term" value="C:membrane"/>
    <property type="evidence" value="ECO:0007669"/>
    <property type="project" value="UniProtKB-SubCell"/>
</dbReference>
<accession>A0A182BSS5</accession>
<feature type="signal peptide" evidence="1">
    <location>
        <begin position="1"/>
        <end position="23"/>
    </location>
</feature>
<feature type="chain" id="PRO_0000446908" description="Secreted RxLR effector protein 64" evidence="1">
    <location>
        <begin position="24"/>
        <end position="101"/>
    </location>
</feature>
<feature type="transmembrane region" description="Helical" evidence="1">
    <location>
        <begin position="67"/>
        <end position="87"/>
    </location>
</feature>
<feature type="short sequence motif" description="RxLR" evidence="5">
    <location>
        <begin position="48"/>
        <end position="51"/>
    </location>
</feature>